<proteinExistence type="inferred from homology"/>
<reference key="1">
    <citation type="journal article" date="2008" name="J. Bacteriol.">
        <title>The pangenome structure of Escherichia coli: comparative genomic analysis of E. coli commensal and pathogenic isolates.</title>
        <authorList>
            <person name="Rasko D.A."/>
            <person name="Rosovitz M.J."/>
            <person name="Myers G.S.A."/>
            <person name="Mongodin E.F."/>
            <person name="Fricke W.F."/>
            <person name="Gajer P."/>
            <person name="Crabtree J."/>
            <person name="Sebaihia M."/>
            <person name="Thomson N.R."/>
            <person name="Chaudhuri R."/>
            <person name="Henderson I.R."/>
            <person name="Sperandio V."/>
            <person name="Ravel J."/>
        </authorList>
    </citation>
    <scope>NUCLEOTIDE SEQUENCE [LARGE SCALE GENOMIC DNA]</scope>
    <source>
        <strain>HS</strain>
    </source>
</reference>
<protein>
    <recommendedName>
        <fullName evidence="1">Ribosome maturation factor RimP</fullName>
    </recommendedName>
</protein>
<evidence type="ECO:0000255" key="1">
    <source>
        <dbReference type="HAMAP-Rule" id="MF_01077"/>
    </source>
</evidence>
<dbReference type="EMBL" id="CP000802">
    <property type="protein sequence ID" value="ABV07590.1"/>
    <property type="molecule type" value="Genomic_DNA"/>
</dbReference>
<dbReference type="RefSeq" id="WP_001300397.1">
    <property type="nucleotide sequence ID" value="NC_009800.1"/>
</dbReference>
<dbReference type="SMR" id="A8A4Y6"/>
<dbReference type="GeneID" id="93778813"/>
<dbReference type="KEGG" id="ecx:EcHS_A3362"/>
<dbReference type="HOGENOM" id="CLU_070525_1_1_6"/>
<dbReference type="GO" id="GO:0005829">
    <property type="term" value="C:cytosol"/>
    <property type="evidence" value="ECO:0007669"/>
    <property type="project" value="TreeGrafter"/>
</dbReference>
<dbReference type="GO" id="GO:0000028">
    <property type="term" value="P:ribosomal small subunit assembly"/>
    <property type="evidence" value="ECO:0007669"/>
    <property type="project" value="TreeGrafter"/>
</dbReference>
<dbReference type="GO" id="GO:0006412">
    <property type="term" value="P:translation"/>
    <property type="evidence" value="ECO:0007669"/>
    <property type="project" value="TreeGrafter"/>
</dbReference>
<dbReference type="CDD" id="cd01734">
    <property type="entry name" value="YlxS_C"/>
    <property type="match status" value="1"/>
</dbReference>
<dbReference type="FunFam" id="2.30.30.180:FF:000001">
    <property type="entry name" value="Ribosome maturation factor RimP"/>
    <property type="match status" value="1"/>
</dbReference>
<dbReference type="FunFam" id="3.30.300.70:FF:000001">
    <property type="entry name" value="Ribosome maturation factor RimP"/>
    <property type="match status" value="1"/>
</dbReference>
<dbReference type="Gene3D" id="2.30.30.180">
    <property type="entry name" value="Ribosome maturation factor RimP, C-terminal domain"/>
    <property type="match status" value="1"/>
</dbReference>
<dbReference type="Gene3D" id="3.30.300.70">
    <property type="entry name" value="RimP-like superfamily, N-terminal"/>
    <property type="match status" value="1"/>
</dbReference>
<dbReference type="HAMAP" id="MF_01077">
    <property type="entry name" value="RimP"/>
    <property type="match status" value="1"/>
</dbReference>
<dbReference type="InterPro" id="IPR003728">
    <property type="entry name" value="Ribosome_maturation_RimP"/>
</dbReference>
<dbReference type="InterPro" id="IPR028998">
    <property type="entry name" value="RimP_C"/>
</dbReference>
<dbReference type="InterPro" id="IPR036847">
    <property type="entry name" value="RimP_C_sf"/>
</dbReference>
<dbReference type="InterPro" id="IPR028989">
    <property type="entry name" value="RimP_N"/>
</dbReference>
<dbReference type="InterPro" id="IPR035956">
    <property type="entry name" value="RimP_N_sf"/>
</dbReference>
<dbReference type="NCBIfam" id="NF000927">
    <property type="entry name" value="PRK00092.1-1"/>
    <property type="match status" value="1"/>
</dbReference>
<dbReference type="PANTHER" id="PTHR33867">
    <property type="entry name" value="RIBOSOME MATURATION FACTOR RIMP"/>
    <property type="match status" value="1"/>
</dbReference>
<dbReference type="PANTHER" id="PTHR33867:SF1">
    <property type="entry name" value="RIBOSOME MATURATION FACTOR RIMP"/>
    <property type="match status" value="1"/>
</dbReference>
<dbReference type="Pfam" id="PF17384">
    <property type="entry name" value="DUF150_C"/>
    <property type="match status" value="1"/>
</dbReference>
<dbReference type="Pfam" id="PF02576">
    <property type="entry name" value="RimP_N"/>
    <property type="match status" value="1"/>
</dbReference>
<dbReference type="SUPFAM" id="SSF74942">
    <property type="entry name" value="YhbC-like, C-terminal domain"/>
    <property type="match status" value="1"/>
</dbReference>
<dbReference type="SUPFAM" id="SSF75420">
    <property type="entry name" value="YhbC-like, N-terminal domain"/>
    <property type="match status" value="1"/>
</dbReference>
<organism>
    <name type="scientific">Escherichia coli O9:H4 (strain HS)</name>
    <dbReference type="NCBI Taxonomy" id="331112"/>
    <lineage>
        <taxon>Bacteria</taxon>
        <taxon>Pseudomonadati</taxon>
        <taxon>Pseudomonadota</taxon>
        <taxon>Gammaproteobacteria</taxon>
        <taxon>Enterobacterales</taxon>
        <taxon>Enterobacteriaceae</taxon>
        <taxon>Escherichia</taxon>
    </lineage>
</organism>
<name>RIMP_ECOHS</name>
<feature type="chain" id="PRO_0000384665" description="Ribosome maturation factor RimP">
    <location>
        <begin position="1"/>
        <end position="150"/>
    </location>
</feature>
<sequence>MSTLEQKLTEMITAPVEALGFELVGIEFIRGRTSTLRIYIDSEDGINVDDCADVSHQVSAVLDVEDPITVAYNLEVSSPGLDRPLFTAEHYARFVGEEVTLVLRMAVQNRRKWQGVIKAVDGEMITVTVEGKDEVFALSNIQKANLVPHF</sequence>
<keyword id="KW-0963">Cytoplasm</keyword>
<keyword id="KW-0690">Ribosome biogenesis</keyword>
<comment type="function">
    <text evidence="1">Required for maturation of 30S ribosomal subunits.</text>
</comment>
<comment type="subcellular location">
    <subcellularLocation>
        <location evidence="1">Cytoplasm</location>
    </subcellularLocation>
</comment>
<comment type="similarity">
    <text evidence="1">Belongs to the RimP family.</text>
</comment>
<accession>A8A4Y6</accession>
<gene>
    <name evidence="1" type="primary">rimP</name>
    <name type="ordered locus">EcHS_A3362</name>
</gene>